<protein>
    <recommendedName>
        <fullName>Calmodulin</fullName>
        <shortName>CaM</shortName>
    </recommendedName>
</protein>
<comment type="function">
    <text>Calmodulin mediates the control of a large number of enzymes, ion channels and other proteins by Ca(2+). Among the enzymes to be stimulated by the calmodulin-Ca(2+) complex are a number of protein kinases and phosphatases.</text>
</comment>
<comment type="miscellaneous">
    <text>This protein has four functional calcium-binding sites.</text>
</comment>
<comment type="similarity">
    <text evidence="3">Belongs to the calmodulin family.</text>
</comment>
<sequence>MADQLTEEQIAEF</sequence>
<dbReference type="EMBL" id="D12774">
    <property type="protein sequence ID" value="BAA02239.1"/>
    <property type="molecule type" value="Genomic_DNA"/>
</dbReference>
<proteinExistence type="inferred from homology"/>
<organism>
    <name type="scientific">Tetrahymena thermophila</name>
    <dbReference type="NCBI Taxonomy" id="5911"/>
    <lineage>
        <taxon>Eukaryota</taxon>
        <taxon>Sar</taxon>
        <taxon>Alveolata</taxon>
        <taxon>Ciliophora</taxon>
        <taxon>Intramacronucleata</taxon>
        <taxon>Oligohymenophorea</taxon>
        <taxon>Hymenostomatida</taxon>
        <taxon>Tetrahymenina</taxon>
        <taxon>Tetrahymenidae</taxon>
        <taxon>Tetrahymena</taxon>
    </lineage>
</organism>
<evidence type="ECO:0000250" key="1"/>
<evidence type="ECO:0000255" key="2">
    <source>
        <dbReference type="PROSITE-ProRule" id="PRU00448"/>
    </source>
</evidence>
<evidence type="ECO:0000305" key="3"/>
<keyword id="KW-0007">Acetylation</keyword>
<keyword id="KW-0106">Calcium</keyword>
<keyword id="KW-0677">Repeat</keyword>
<name>CALM_TETTH</name>
<accession>Q05055</accession>
<reference key="1">
    <citation type="journal article" date="1993" name="Nucleic Acids Res.">
        <title>A micronucleus-specific sequence exists in the 5'-upstream region of calmodulin gene in Tetrahymena thermophila.</title>
        <authorList>
            <person name="Katoh M."/>
            <person name="Hirono M."/>
            <person name="Takemasa T."/>
            <person name="Kimura M."/>
            <person name="Watanabe Y."/>
        </authorList>
    </citation>
    <scope>NUCLEOTIDE SEQUENCE [GENOMIC DNA]</scope>
</reference>
<feature type="initiator methionine" description="Removed" evidence="1">
    <location>
        <position position="1"/>
    </location>
</feature>
<feature type="chain" id="PRO_0000198274" description="Calmodulin">
    <location>
        <begin position="2"/>
        <end position="13" status="greater than"/>
    </location>
</feature>
<feature type="domain" description="EF-hand" evidence="2">
    <location>
        <begin position="8"/>
        <end position="13" status="greater than"/>
    </location>
</feature>
<feature type="modified residue" description="N-acetylalanine" evidence="1">
    <location>
        <position position="2"/>
    </location>
</feature>
<feature type="non-terminal residue">
    <location>
        <position position="13"/>
    </location>
</feature>